<evidence type="ECO:0000255" key="1">
    <source>
        <dbReference type="HAMAP-Rule" id="MF_01007"/>
    </source>
</evidence>
<reference key="1">
    <citation type="journal article" date="2008" name="DNA Res.">
        <title>Determination of the genome sequence of Porphyromonas gingivalis strain ATCC 33277 and genomic comparison with strain W83 revealed extensive genome rearrangements in P. gingivalis.</title>
        <authorList>
            <person name="Naito M."/>
            <person name="Hirakawa H."/>
            <person name="Yamashita A."/>
            <person name="Ohara N."/>
            <person name="Shoji M."/>
            <person name="Yukitake H."/>
            <person name="Nakayama K."/>
            <person name="Toh H."/>
            <person name="Yoshimura F."/>
            <person name="Kuhara S."/>
            <person name="Hattori M."/>
            <person name="Hayashi T."/>
            <person name="Nakayama K."/>
        </authorList>
    </citation>
    <scope>NUCLEOTIDE SEQUENCE [LARGE SCALE GENOMIC DNA]</scope>
    <source>
        <strain>ATCC 33277 / DSM 20709 / CIP 103683 / JCM 12257 / NCTC 11834 / 2561</strain>
    </source>
</reference>
<proteinExistence type="inferred from homology"/>
<accession>B2RIE4</accession>
<comment type="function">
    <text evidence="1">Specifically methylates the N4 position of cytidine in position 1402 (C1402) of 16S rRNA.</text>
</comment>
<comment type="catalytic activity">
    <reaction evidence="1">
        <text>cytidine(1402) in 16S rRNA + S-adenosyl-L-methionine = N(4)-methylcytidine(1402) in 16S rRNA + S-adenosyl-L-homocysteine + H(+)</text>
        <dbReference type="Rhea" id="RHEA:42928"/>
        <dbReference type="Rhea" id="RHEA-COMP:10286"/>
        <dbReference type="Rhea" id="RHEA-COMP:10287"/>
        <dbReference type="ChEBI" id="CHEBI:15378"/>
        <dbReference type="ChEBI" id="CHEBI:57856"/>
        <dbReference type="ChEBI" id="CHEBI:59789"/>
        <dbReference type="ChEBI" id="CHEBI:74506"/>
        <dbReference type="ChEBI" id="CHEBI:82748"/>
        <dbReference type="EC" id="2.1.1.199"/>
    </reaction>
</comment>
<comment type="subcellular location">
    <subcellularLocation>
        <location evidence="1">Cytoplasm</location>
    </subcellularLocation>
</comment>
<comment type="similarity">
    <text evidence="1">Belongs to the methyltransferase superfamily. RsmH family.</text>
</comment>
<feature type="chain" id="PRO_0000387037" description="Ribosomal RNA small subunit methyltransferase H">
    <location>
        <begin position="1"/>
        <end position="311"/>
    </location>
</feature>
<feature type="binding site" evidence="1">
    <location>
        <begin position="39"/>
        <end position="41"/>
    </location>
    <ligand>
        <name>S-adenosyl-L-methionine</name>
        <dbReference type="ChEBI" id="CHEBI:59789"/>
    </ligand>
</feature>
<feature type="binding site" evidence="1">
    <location>
        <position position="59"/>
    </location>
    <ligand>
        <name>S-adenosyl-L-methionine</name>
        <dbReference type="ChEBI" id="CHEBI:59789"/>
    </ligand>
</feature>
<feature type="binding site" evidence="1">
    <location>
        <position position="87"/>
    </location>
    <ligand>
        <name>S-adenosyl-L-methionine</name>
        <dbReference type="ChEBI" id="CHEBI:59789"/>
    </ligand>
</feature>
<feature type="binding site" evidence="1">
    <location>
        <position position="102"/>
    </location>
    <ligand>
        <name>S-adenosyl-L-methionine</name>
        <dbReference type="ChEBI" id="CHEBI:59789"/>
    </ligand>
</feature>
<feature type="binding site" evidence="1">
    <location>
        <position position="109"/>
    </location>
    <ligand>
        <name>S-adenosyl-L-methionine</name>
        <dbReference type="ChEBI" id="CHEBI:59789"/>
    </ligand>
</feature>
<sequence length="311" mass="34794">MHCPDKESVYHIPVMLGECLEGLRIDPDGCYVDVTFGGGGHSRAIVEKLSSKGRLYGFDQDADACRNVLQDERFTFVPSNFRYLANFMDYYGEDGVDGILADLGVSSHHFDEEERGFSFRSESPLLDMRMNARAGRNAAAILNEYDASSLSALFYHYGELKQARRLAASIVHYRESLSGGLQTVGQLLEAVRGLISPREEKKQLACIFQALRIEVNDELGALQQMLEAALGCLRSGGRLVVMTYHSLEDRMVKNFLRYGTVKAPDEDSLRLYGAPQSPWQQITRKPLTASTKELSDNPRSRSAKLRIAEKI</sequence>
<organism>
    <name type="scientific">Porphyromonas gingivalis (strain ATCC 33277 / DSM 20709 / CIP 103683 / JCM 12257 / NCTC 11834 / 2561)</name>
    <dbReference type="NCBI Taxonomy" id="431947"/>
    <lineage>
        <taxon>Bacteria</taxon>
        <taxon>Pseudomonadati</taxon>
        <taxon>Bacteroidota</taxon>
        <taxon>Bacteroidia</taxon>
        <taxon>Bacteroidales</taxon>
        <taxon>Porphyromonadaceae</taxon>
        <taxon>Porphyromonas</taxon>
    </lineage>
</organism>
<gene>
    <name evidence="1" type="primary">rsmH</name>
    <name type="synonym">mraW</name>
    <name type="ordered locus">PGN_0620</name>
</gene>
<keyword id="KW-0963">Cytoplasm</keyword>
<keyword id="KW-0489">Methyltransferase</keyword>
<keyword id="KW-0698">rRNA processing</keyword>
<keyword id="KW-0949">S-adenosyl-L-methionine</keyword>
<keyword id="KW-0808">Transferase</keyword>
<protein>
    <recommendedName>
        <fullName evidence="1">Ribosomal RNA small subunit methyltransferase H</fullName>
        <ecNumber evidence="1">2.1.1.199</ecNumber>
    </recommendedName>
    <alternativeName>
        <fullName evidence="1">16S rRNA m(4)C1402 methyltransferase</fullName>
    </alternativeName>
    <alternativeName>
        <fullName evidence="1">rRNA (cytosine-N(4)-)-methyltransferase RsmH</fullName>
    </alternativeName>
</protein>
<dbReference type="EC" id="2.1.1.199" evidence="1"/>
<dbReference type="EMBL" id="AP009380">
    <property type="protein sequence ID" value="BAG33139.1"/>
    <property type="molecule type" value="Genomic_DNA"/>
</dbReference>
<dbReference type="RefSeq" id="WP_012457652.1">
    <property type="nucleotide sequence ID" value="NC_010729.1"/>
</dbReference>
<dbReference type="SMR" id="B2RIE4"/>
<dbReference type="GeneID" id="29255846"/>
<dbReference type="KEGG" id="pgn:PGN_0620"/>
<dbReference type="eggNOG" id="COG0275">
    <property type="taxonomic scope" value="Bacteria"/>
</dbReference>
<dbReference type="HOGENOM" id="CLU_038422_2_0_10"/>
<dbReference type="OrthoDB" id="9806637at2"/>
<dbReference type="BioCyc" id="PGIN431947:G1G2V-681-MONOMER"/>
<dbReference type="Proteomes" id="UP000008842">
    <property type="component" value="Chromosome"/>
</dbReference>
<dbReference type="GO" id="GO:0005737">
    <property type="term" value="C:cytoplasm"/>
    <property type="evidence" value="ECO:0007669"/>
    <property type="project" value="UniProtKB-SubCell"/>
</dbReference>
<dbReference type="GO" id="GO:0071424">
    <property type="term" value="F:rRNA (cytosine-N4-)-methyltransferase activity"/>
    <property type="evidence" value="ECO:0007669"/>
    <property type="project" value="UniProtKB-UniRule"/>
</dbReference>
<dbReference type="GO" id="GO:0070475">
    <property type="term" value="P:rRNA base methylation"/>
    <property type="evidence" value="ECO:0007669"/>
    <property type="project" value="UniProtKB-UniRule"/>
</dbReference>
<dbReference type="Gene3D" id="1.10.150.170">
    <property type="entry name" value="Putative methyltransferase TM0872, insert domain"/>
    <property type="match status" value="1"/>
</dbReference>
<dbReference type="Gene3D" id="3.40.50.150">
    <property type="entry name" value="Vaccinia Virus protein VP39"/>
    <property type="match status" value="1"/>
</dbReference>
<dbReference type="HAMAP" id="MF_01007">
    <property type="entry name" value="16SrRNA_methyltr_H"/>
    <property type="match status" value="1"/>
</dbReference>
<dbReference type="InterPro" id="IPR002903">
    <property type="entry name" value="RsmH"/>
</dbReference>
<dbReference type="InterPro" id="IPR023397">
    <property type="entry name" value="SAM-dep_MeTrfase_MraW_recog"/>
</dbReference>
<dbReference type="InterPro" id="IPR029063">
    <property type="entry name" value="SAM-dependent_MTases_sf"/>
</dbReference>
<dbReference type="NCBIfam" id="TIGR00006">
    <property type="entry name" value="16S rRNA (cytosine(1402)-N(4))-methyltransferase RsmH"/>
    <property type="match status" value="1"/>
</dbReference>
<dbReference type="PANTHER" id="PTHR11265:SF0">
    <property type="entry name" value="12S RRNA N4-METHYLCYTIDINE METHYLTRANSFERASE"/>
    <property type="match status" value="1"/>
</dbReference>
<dbReference type="PANTHER" id="PTHR11265">
    <property type="entry name" value="S-ADENOSYL-METHYLTRANSFERASE MRAW"/>
    <property type="match status" value="1"/>
</dbReference>
<dbReference type="Pfam" id="PF01795">
    <property type="entry name" value="Methyltransf_5"/>
    <property type="match status" value="1"/>
</dbReference>
<dbReference type="PIRSF" id="PIRSF004486">
    <property type="entry name" value="MraW"/>
    <property type="match status" value="1"/>
</dbReference>
<dbReference type="SUPFAM" id="SSF81799">
    <property type="entry name" value="Putative methyltransferase TM0872, insert domain"/>
    <property type="match status" value="1"/>
</dbReference>
<dbReference type="SUPFAM" id="SSF53335">
    <property type="entry name" value="S-adenosyl-L-methionine-dependent methyltransferases"/>
    <property type="match status" value="1"/>
</dbReference>
<name>RSMH_PORG3</name>